<name>SUOX_MOUSE</name>
<evidence type="ECO:0000250" key="1">
    <source>
        <dbReference type="UniProtKB" id="P07850"/>
    </source>
</evidence>
<evidence type="ECO:0000250" key="2">
    <source>
        <dbReference type="UniProtKB" id="P51687"/>
    </source>
</evidence>
<evidence type="ECO:0000250" key="3">
    <source>
        <dbReference type="UniProtKB" id="Q07116"/>
    </source>
</evidence>
<evidence type="ECO:0000255" key="4">
    <source>
        <dbReference type="PROSITE-ProRule" id="PRU00279"/>
    </source>
</evidence>
<evidence type="ECO:0000305" key="5"/>
<comment type="function">
    <text evidence="3">Catalyzes the oxidation of sulfite to sulfate, the terminal reaction in the oxidative degradation of sulfur-containing amino acids.</text>
</comment>
<comment type="catalytic activity">
    <reaction evidence="3">
        <text>sulfite + O2 + H2O = sulfate + H2O2</text>
        <dbReference type="Rhea" id="RHEA:24600"/>
        <dbReference type="ChEBI" id="CHEBI:15377"/>
        <dbReference type="ChEBI" id="CHEBI:15379"/>
        <dbReference type="ChEBI" id="CHEBI:16189"/>
        <dbReference type="ChEBI" id="CHEBI:16240"/>
        <dbReference type="ChEBI" id="CHEBI:17359"/>
        <dbReference type="EC" id="1.8.3.1"/>
    </reaction>
    <physiologicalReaction direction="left-to-right" evidence="3">
        <dbReference type="Rhea" id="RHEA:24601"/>
    </physiologicalReaction>
</comment>
<comment type="cofactor">
    <cofactor evidence="3">
        <name>heme b</name>
        <dbReference type="ChEBI" id="CHEBI:60344"/>
    </cofactor>
    <text evidence="3">Binds 1 heme b (iron(II)-protoporphyrin IX) group non-covalently per subunit.</text>
</comment>
<comment type="cofactor">
    <cofactor evidence="3">
        <name>Mo-molybdopterin</name>
        <dbReference type="ChEBI" id="CHEBI:71302"/>
    </cofactor>
    <text evidence="3">Binds 1 Mo-molybdopterin (Mo-MPT) cofactor per subunit.</text>
</comment>
<comment type="pathway">
    <text evidence="3">Energy metabolism; sulfur metabolism.</text>
</comment>
<comment type="subunit">
    <text evidence="3">Homodimer.</text>
</comment>
<comment type="subcellular location">
    <subcellularLocation>
        <location evidence="3">Mitochondrion intermembrane space</location>
    </subcellularLocation>
</comment>
<comment type="sequence caution" evidence="5">
    <conflict type="erroneous initiation">
        <sequence resource="EMBL-CDS" id="BAE32710"/>
    </conflict>
    <text>Truncated N-terminus.</text>
</comment>
<dbReference type="EC" id="1.8.3.1"/>
<dbReference type="EMBL" id="AK149422">
    <property type="protein sequence ID" value="BAE28865.1"/>
    <property type="molecule type" value="mRNA"/>
</dbReference>
<dbReference type="EMBL" id="AK154608">
    <property type="protein sequence ID" value="BAE32710.1"/>
    <property type="status" value="ALT_INIT"/>
    <property type="molecule type" value="mRNA"/>
</dbReference>
<dbReference type="EMBL" id="BC027197">
    <property type="protein sequence ID" value="AAH27197.2"/>
    <property type="molecule type" value="mRNA"/>
</dbReference>
<dbReference type="CCDS" id="CCDS24285.1"/>
<dbReference type="RefSeq" id="NP_776094.2">
    <property type="nucleotide sequence ID" value="NM_173733.3"/>
</dbReference>
<dbReference type="SMR" id="Q8R086"/>
<dbReference type="BioGRID" id="229229">
    <property type="interactions" value="1"/>
</dbReference>
<dbReference type="FunCoup" id="Q8R086">
    <property type="interactions" value="2093"/>
</dbReference>
<dbReference type="IntAct" id="Q8R086">
    <property type="interactions" value="1"/>
</dbReference>
<dbReference type="STRING" id="10090.ENSMUSP00000056195"/>
<dbReference type="GlyGen" id="Q8R086">
    <property type="glycosylation" value="1 site, 1 O-linked glycan (1 site)"/>
</dbReference>
<dbReference type="iPTMnet" id="Q8R086"/>
<dbReference type="PhosphoSitePlus" id="Q8R086"/>
<dbReference type="SwissPalm" id="Q8R086"/>
<dbReference type="REPRODUCTION-2DPAGE" id="Q8R086"/>
<dbReference type="jPOST" id="Q8R086"/>
<dbReference type="PaxDb" id="10090-ENSMUSP00000056195"/>
<dbReference type="PeptideAtlas" id="Q8R086"/>
<dbReference type="ProteomicsDB" id="257508"/>
<dbReference type="Pumba" id="Q8R086"/>
<dbReference type="Antibodypedia" id="27840">
    <property type="antibodies" value="388 antibodies from 29 providers"/>
</dbReference>
<dbReference type="DNASU" id="211389"/>
<dbReference type="Ensembl" id="ENSMUST00000054764.9">
    <property type="protein sequence ID" value="ENSMUSP00000056195.8"/>
    <property type="gene ID" value="ENSMUSG00000049858.9"/>
</dbReference>
<dbReference type="GeneID" id="211389"/>
<dbReference type="KEGG" id="mmu:211389"/>
<dbReference type="UCSC" id="uc007hnt.2">
    <property type="organism name" value="mouse"/>
</dbReference>
<dbReference type="AGR" id="MGI:2446117"/>
<dbReference type="CTD" id="6821"/>
<dbReference type="MGI" id="MGI:2446117">
    <property type="gene designation" value="Suox"/>
</dbReference>
<dbReference type="VEuPathDB" id="HostDB:ENSMUSG00000049858"/>
<dbReference type="eggNOG" id="KOG0535">
    <property type="taxonomic scope" value="Eukaryota"/>
</dbReference>
<dbReference type="eggNOG" id="KOG4576">
    <property type="taxonomic scope" value="Eukaryota"/>
</dbReference>
<dbReference type="GeneTree" id="ENSGT00390000003749"/>
<dbReference type="HOGENOM" id="CLU_003827_5_1_1"/>
<dbReference type="InParanoid" id="Q8R086"/>
<dbReference type="OMA" id="TWHVAEL"/>
<dbReference type="OrthoDB" id="10051395at2759"/>
<dbReference type="PhylomeDB" id="Q8R086"/>
<dbReference type="TreeFam" id="TF300905"/>
<dbReference type="Reactome" id="R-MMU-1614517">
    <property type="pathway name" value="Sulfide oxidation to sulfate"/>
</dbReference>
<dbReference type="UniPathway" id="UPA00096"/>
<dbReference type="BioGRID-ORCS" id="211389">
    <property type="hits" value="3 hits in 76 CRISPR screens"/>
</dbReference>
<dbReference type="PRO" id="PR:Q8R086"/>
<dbReference type="Proteomes" id="UP000000589">
    <property type="component" value="Chromosome 10"/>
</dbReference>
<dbReference type="RNAct" id="Q8R086">
    <property type="molecule type" value="protein"/>
</dbReference>
<dbReference type="Bgee" id="ENSMUSG00000049858">
    <property type="expression patterns" value="Expressed in seminal vesicle and 218 other cell types or tissues"/>
</dbReference>
<dbReference type="GO" id="GO:0005758">
    <property type="term" value="C:mitochondrial intermembrane space"/>
    <property type="evidence" value="ECO:0007669"/>
    <property type="project" value="UniProtKB-SubCell"/>
</dbReference>
<dbReference type="GO" id="GO:0005739">
    <property type="term" value="C:mitochondrion"/>
    <property type="evidence" value="ECO:0007005"/>
    <property type="project" value="MGI"/>
</dbReference>
<dbReference type="GO" id="GO:0020037">
    <property type="term" value="F:heme binding"/>
    <property type="evidence" value="ECO:0007669"/>
    <property type="project" value="InterPro"/>
</dbReference>
<dbReference type="GO" id="GO:0030151">
    <property type="term" value="F:molybdenum ion binding"/>
    <property type="evidence" value="ECO:0007669"/>
    <property type="project" value="InterPro"/>
</dbReference>
<dbReference type="GO" id="GO:0043546">
    <property type="term" value="F:molybdopterin cofactor binding"/>
    <property type="evidence" value="ECO:0007669"/>
    <property type="project" value="InterPro"/>
</dbReference>
<dbReference type="GO" id="GO:0008482">
    <property type="term" value="F:sulfite oxidase activity"/>
    <property type="evidence" value="ECO:0007669"/>
    <property type="project" value="UniProtKB-EC"/>
</dbReference>
<dbReference type="GO" id="GO:0006790">
    <property type="term" value="P:sulfur compound metabolic process"/>
    <property type="evidence" value="ECO:0007669"/>
    <property type="project" value="UniProtKB-UniPathway"/>
</dbReference>
<dbReference type="CDD" id="cd02111">
    <property type="entry name" value="eukary_SO_Moco"/>
    <property type="match status" value="1"/>
</dbReference>
<dbReference type="FunFam" id="2.60.40.650:FF:000003">
    <property type="entry name" value="Sulfite oxidase, mitochondrial"/>
    <property type="match status" value="1"/>
</dbReference>
<dbReference type="FunFam" id="3.10.120.10:FF:000007">
    <property type="entry name" value="Sulfite oxidase, mitochondrial"/>
    <property type="match status" value="1"/>
</dbReference>
<dbReference type="FunFam" id="3.90.420.10:FF:000002">
    <property type="entry name" value="sulfite oxidase, mitochondrial"/>
    <property type="match status" value="1"/>
</dbReference>
<dbReference type="Gene3D" id="2.60.40.650">
    <property type="match status" value="1"/>
</dbReference>
<dbReference type="Gene3D" id="3.10.120.10">
    <property type="entry name" value="Cytochrome b5-like heme/steroid binding domain"/>
    <property type="match status" value="1"/>
</dbReference>
<dbReference type="Gene3D" id="3.90.420.10">
    <property type="entry name" value="Oxidoreductase, molybdopterin-binding domain"/>
    <property type="match status" value="1"/>
</dbReference>
<dbReference type="InterPro" id="IPR001199">
    <property type="entry name" value="Cyt_B5-like_heme/steroid-bd"/>
</dbReference>
<dbReference type="InterPro" id="IPR036400">
    <property type="entry name" value="Cyt_B5-like_heme/steroid_sf"/>
</dbReference>
<dbReference type="InterPro" id="IPR018506">
    <property type="entry name" value="Cyt_B5_heme-BS"/>
</dbReference>
<dbReference type="InterPro" id="IPR014756">
    <property type="entry name" value="Ig_E-set"/>
</dbReference>
<dbReference type="InterPro" id="IPR005066">
    <property type="entry name" value="MoCF_OxRdtse_dimer"/>
</dbReference>
<dbReference type="InterPro" id="IPR008335">
    <property type="entry name" value="Mopterin_OxRdtase_euk"/>
</dbReference>
<dbReference type="InterPro" id="IPR000572">
    <property type="entry name" value="OxRdtase_Mopterin-bd_dom"/>
</dbReference>
<dbReference type="InterPro" id="IPR036374">
    <property type="entry name" value="OxRdtase_Mopterin-bd_sf"/>
</dbReference>
<dbReference type="InterPro" id="IPR022407">
    <property type="entry name" value="OxRdtase_Mopterin_BS"/>
</dbReference>
<dbReference type="PANTHER" id="PTHR19372:SF7">
    <property type="entry name" value="SULFITE OXIDASE, MITOCHONDRIAL"/>
    <property type="match status" value="1"/>
</dbReference>
<dbReference type="PANTHER" id="PTHR19372">
    <property type="entry name" value="SULFITE REDUCTASE"/>
    <property type="match status" value="1"/>
</dbReference>
<dbReference type="Pfam" id="PF00173">
    <property type="entry name" value="Cyt-b5"/>
    <property type="match status" value="1"/>
</dbReference>
<dbReference type="Pfam" id="PF03404">
    <property type="entry name" value="Mo-co_dimer"/>
    <property type="match status" value="1"/>
</dbReference>
<dbReference type="Pfam" id="PF00174">
    <property type="entry name" value="Oxidored_molyb"/>
    <property type="match status" value="1"/>
</dbReference>
<dbReference type="PRINTS" id="PR00363">
    <property type="entry name" value="CYTOCHROMEB5"/>
</dbReference>
<dbReference type="PRINTS" id="PR00407">
    <property type="entry name" value="EUMOPTERIN"/>
</dbReference>
<dbReference type="SMART" id="SM01117">
    <property type="entry name" value="Cyt-b5"/>
    <property type="match status" value="1"/>
</dbReference>
<dbReference type="SUPFAM" id="SSF55856">
    <property type="entry name" value="Cytochrome b5-like heme/steroid binding domain"/>
    <property type="match status" value="1"/>
</dbReference>
<dbReference type="SUPFAM" id="SSF81296">
    <property type="entry name" value="E set domains"/>
    <property type="match status" value="1"/>
</dbReference>
<dbReference type="SUPFAM" id="SSF56524">
    <property type="entry name" value="Oxidoreductase molybdopterin-binding domain"/>
    <property type="match status" value="1"/>
</dbReference>
<dbReference type="PROSITE" id="PS00191">
    <property type="entry name" value="CYTOCHROME_B5_1"/>
    <property type="match status" value="1"/>
</dbReference>
<dbReference type="PROSITE" id="PS50255">
    <property type="entry name" value="CYTOCHROME_B5_2"/>
    <property type="match status" value="1"/>
</dbReference>
<dbReference type="PROSITE" id="PS00559">
    <property type="entry name" value="MOLYBDOPTERIN_EUK"/>
    <property type="match status" value="1"/>
</dbReference>
<gene>
    <name type="primary">Suox</name>
</gene>
<accession>Q8R086</accession>
<accession>Q3U3S5</accession>
<accession>Q3UEP6</accession>
<protein>
    <recommendedName>
        <fullName>Sulfite oxidase, mitochondrial</fullName>
        <ecNumber>1.8.3.1</ecNumber>
    </recommendedName>
</protein>
<keyword id="KW-0349">Heme</keyword>
<keyword id="KW-0408">Iron</keyword>
<keyword id="KW-0479">Metal-binding</keyword>
<keyword id="KW-0496">Mitochondrion</keyword>
<keyword id="KW-0500">Molybdenum</keyword>
<keyword id="KW-0560">Oxidoreductase</keyword>
<keyword id="KW-0597">Phosphoprotein</keyword>
<keyword id="KW-1185">Reference proteome</keyword>
<keyword id="KW-0809">Transit peptide</keyword>
<sequence length="546" mass="60756">MLLQLYRSVVVRLPQAIRVKSTPLRLCIQACSTNDSLEPQHPSLTFSDDNSRTRRWKVMGTLLGLGVVLVYHEHRCRASQESPRMYSKEDVRSHNNPKTGVWVTLGSEVFDVTKFVDLHPGGPSKLMLAAGGPLEPFWALYAVHNQPHVRELLAEYKIGELNPEDSMSPSVEASDPYADDPIRHPALRINSQRPFNAEPPPELLTEGYITPNPIFFTRNHLPVPNLDPHTYRLHVVGAPGGQSLSLSLDDLHKFPKHEVTVTLQCAGNRRSEMSKVKEVKGLEWRTGAISTARWAGARLCDVLAQAGHRLCDSEAHVCFEGLDSDPTGTAYGASIPLARAMDPEAEVLLAYEMNGQPLPRDHGFPVRVVVPGVVGARHVKWLGRVSVESEESYSHWQRRDYKGFSPSVDWDTVNFDLAPSIQELPIQSAITQPQDGAIVESGEVTIKGYAWSGGGRAVIRVDVSVDGGLTWQEAELEGEEQCPRKAWAWRIWQLKAQVPAEQKELNIICKAVDDSYNVQPDTVAPIWNLRGVLSNAWHRVHVQVVP</sequence>
<organism>
    <name type="scientific">Mus musculus</name>
    <name type="common">Mouse</name>
    <dbReference type="NCBI Taxonomy" id="10090"/>
    <lineage>
        <taxon>Eukaryota</taxon>
        <taxon>Metazoa</taxon>
        <taxon>Chordata</taxon>
        <taxon>Craniata</taxon>
        <taxon>Vertebrata</taxon>
        <taxon>Euteleostomi</taxon>
        <taxon>Mammalia</taxon>
        <taxon>Eutheria</taxon>
        <taxon>Euarchontoglires</taxon>
        <taxon>Glires</taxon>
        <taxon>Rodentia</taxon>
        <taxon>Myomorpha</taxon>
        <taxon>Muroidea</taxon>
        <taxon>Muridae</taxon>
        <taxon>Murinae</taxon>
        <taxon>Mus</taxon>
        <taxon>Mus</taxon>
    </lineage>
</organism>
<reference key="1">
    <citation type="journal article" date="2005" name="Science">
        <title>The transcriptional landscape of the mammalian genome.</title>
        <authorList>
            <person name="Carninci P."/>
            <person name="Kasukawa T."/>
            <person name="Katayama S."/>
            <person name="Gough J."/>
            <person name="Frith M.C."/>
            <person name="Maeda N."/>
            <person name="Oyama R."/>
            <person name="Ravasi T."/>
            <person name="Lenhard B."/>
            <person name="Wells C."/>
            <person name="Kodzius R."/>
            <person name="Shimokawa K."/>
            <person name="Bajic V.B."/>
            <person name="Brenner S.E."/>
            <person name="Batalov S."/>
            <person name="Forrest A.R."/>
            <person name="Zavolan M."/>
            <person name="Davis M.J."/>
            <person name="Wilming L.G."/>
            <person name="Aidinis V."/>
            <person name="Allen J.E."/>
            <person name="Ambesi-Impiombato A."/>
            <person name="Apweiler R."/>
            <person name="Aturaliya R.N."/>
            <person name="Bailey T.L."/>
            <person name="Bansal M."/>
            <person name="Baxter L."/>
            <person name="Beisel K.W."/>
            <person name="Bersano T."/>
            <person name="Bono H."/>
            <person name="Chalk A.M."/>
            <person name="Chiu K.P."/>
            <person name="Choudhary V."/>
            <person name="Christoffels A."/>
            <person name="Clutterbuck D.R."/>
            <person name="Crowe M.L."/>
            <person name="Dalla E."/>
            <person name="Dalrymple B.P."/>
            <person name="de Bono B."/>
            <person name="Della Gatta G."/>
            <person name="di Bernardo D."/>
            <person name="Down T."/>
            <person name="Engstrom P."/>
            <person name="Fagiolini M."/>
            <person name="Faulkner G."/>
            <person name="Fletcher C.F."/>
            <person name="Fukushima T."/>
            <person name="Furuno M."/>
            <person name="Futaki S."/>
            <person name="Gariboldi M."/>
            <person name="Georgii-Hemming P."/>
            <person name="Gingeras T.R."/>
            <person name="Gojobori T."/>
            <person name="Green R.E."/>
            <person name="Gustincich S."/>
            <person name="Harbers M."/>
            <person name="Hayashi Y."/>
            <person name="Hensch T.K."/>
            <person name="Hirokawa N."/>
            <person name="Hill D."/>
            <person name="Huminiecki L."/>
            <person name="Iacono M."/>
            <person name="Ikeo K."/>
            <person name="Iwama A."/>
            <person name="Ishikawa T."/>
            <person name="Jakt M."/>
            <person name="Kanapin A."/>
            <person name="Katoh M."/>
            <person name="Kawasawa Y."/>
            <person name="Kelso J."/>
            <person name="Kitamura H."/>
            <person name="Kitano H."/>
            <person name="Kollias G."/>
            <person name="Krishnan S.P."/>
            <person name="Kruger A."/>
            <person name="Kummerfeld S.K."/>
            <person name="Kurochkin I.V."/>
            <person name="Lareau L.F."/>
            <person name="Lazarevic D."/>
            <person name="Lipovich L."/>
            <person name="Liu J."/>
            <person name="Liuni S."/>
            <person name="McWilliam S."/>
            <person name="Madan Babu M."/>
            <person name="Madera M."/>
            <person name="Marchionni L."/>
            <person name="Matsuda H."/>
            <person name="Matsuzawa S."/>
            <person name="Miki H."/>
            <person name="Mignone F."/>
            <person name="Miyake S."/>
            <person name="Morris K."/>
            <person name="Mottagui-Tabar S."/>
            <person name="Mulder N."/>
            <person name="Nakano N."/>
            <person name="Nakauchi H."/>
            <person name="Ng P."/>
            <person name="Nilsson R."/>
            <person name="Nishiguchi S."/>
            <person name="Nishikawa S."/>
            <person name="Nori F."/>
            <person name="Ohara O."/>
            <person name="Okazaki Y."/>
            <person name="Orlando V."/>
            <person name="Pang K.C."/>
            <person name="Pavan W.J."/>
            <person name="Pavesi G."/>
            <person name="Pesole G."/>
            <person name="Petrovsky N."/>
            <person name="Piazza S."/>
            <person name="Reed J."/>
            <person name="Reid J.F."/>
            <person name="Ring B.Z."/>
            <person name="Ringwald M."/>
            <person name="Rost B."/>
            <person name="Ruan Y."/>
            <person name="Salzberg S.L."/>
            <person name="Sandelin A."/>
            <person name="Schneider C."/>
            <person name="Schoenbach C."/>
            <person name="Sekiguchi K."/>
            <person name="Semple C.A."/>
            <person name="Seno S."/>
            <person name="Sessa L."/>
            <person name="Sheng Y."/>
            <person name="Shibata Y."/>
            <person name="Shimada H."/>
            <person name="Shimada K."/>
            <person name="Silva D."/>
            <person name="Sinclair B."/>
            <person name="Sperling S."/>
            <person name="Stupka E."/>
            <person name="Sugiura K."/>
            <person name="Sultana R."/>
            <person name="Takenaka Y."/>
            <person name="Taki K."/>
            <person name="Tammoja K."/>
            <person name="Tan S.L."/>
            <person name="Tang S."/>
            <person name="Taylor M.S."/>
            <person name="Tegner J."/>
            <person name="Teichmann S.A."/>
            <person name="Ueda H.R."/>
            <person name="van Nimwegen E."/>
            <person name="Verardo R."/>
            <person name="Wei C.L."/>
            <person name="Yagi K."/>
            <person name="Yamanishi H."/>
            <person name="Zabarovsky E."/>
            <person name="Zhu S."/>
            <person name="Zimmer A."/>
            <person name="Hide W."/>
            <person name="Bult C."/>
            <person name="Grimmond S.M."/>
            <person name="Teasdale R.D."/>
            <person name="Liu E.T."/>
            <person name="Brusic V."/>
            <person name="Quackenbush J."/>
            <person name="Wahlestedt C."/>
            <person name="Mattick J.S."/>
            <person name="Hume D.A."/>
            <person name="Kai C."/>
            <person name="Sasaki D."/>
            <person name="Tomaru Y."/>
            <person name="Fukuda S."/>
            <person name="Kanamori-Katayama M."/>
            <person name="Suzuki M."/>
            <person name="Aoki J."/>
            <person name="Arakawa T."/>
            <person name="Iida J."/>
            <person name="Imamura K."/>
            <person name="Itoh M."/>
            <person name="Kato T."/>
            <person name="Kawaji H."/>
            <person name="Kawagashira N."/>
            <person name="Kawashima T."/>
            <person name="Kojima M."/>
            <person name="Kondo S."/>
            <person name="Konno H."/>
            <person name="Nakano K."/>
            <person name="Ninomiya N."/>
            <person name="Nishio T."/>
            <person name="Okada M."/>
            <person name="Plessy C."/>
            <person name="Shibata K."/>
            <person name="Shiraki T."/>
            <person name="Suzuki S."/>
            <person name="Tagami M."/>
            <person name="Waki K."/>
            <person name="Watahiki A."/>
            <person name="Okamura-Oho Y."/>
            <person name="Suzuki H."/>
            <person name="Kawai J."/>
            <person name="Hayashizaki Y."/>
        </authorList>
    </citation>
    <scope>NUCLEOTIDE SEQUENCE [LARGE SCALE MRNA]</scope>
    <source>
        <strain>C57BL/6J</strain>
        <strain>NOD</strain>
        <tissue>Liver</tissue>
    </source>
</reference>
<reference key="2">
    <citation type="journal article" date="2004" name="Genome Res.">
        <title>The status, quality, and expansion of the NIH full-length cDNA project: the Mammalian Gene Collection (MGC).</title>
        <authorList>
            <consortium name="The MGC Project Team"/>
        </authorList>
    </citation>
    <scope>NUCLEOTIDE SEQUENCE [LARGE SCALE MRNA]</scope>
    <source>
        <tissue>Liver</tissue>
    </source>
</reference>
<reference key="3">
    <citation type="journal article" date="2010" name="Cell">
        <title>A tissue-specific atlas of mouse protein phosphorylation and expression.</title>
        <authorList>
            <person name="Huttlin E.L."/>
            <person name="Jedrychowski M.P."/>
            <person name="Elias J.E."/>
            <person name="Goswami T."/>
            <person name="Rad R."/>
            <person name="Beausoleil S.A."/>
            <person name="Villen J."/>
            <person name="Haas W."/>
            <person name="Sowa M.E."/>
            <person name="Gygi S.P."/>
        </authorList>
    </citation>
    <scope>IDENTIFICATION BY MASS SPECTROMETRY [LARGE SCALE ANALYSIS]</scope>
    <source>
        <tissue>Brain</tissue>
        <tissue>Brown adipose tissue</tissue>
        <tissue>Heart</tissue>
        <tissue>Kidney</tissue>
        <tissue>Liver</tissue>
        <tissue>Lung</tissue>
        <tissue>Spleen</tissue>
        <tissue>Testis</tissue>
    </source>
</reference>
<feature type="transit peptide" description="Mitochondrion" evidence="3">
    <location>
        <begin position="1"/>
        <end position="80"/>
    </location>
</feature>
<feature type="chain" id="PRO_0000006483" description="Sulfite oxidase, mitochondrial">
    <location>
        <begin position="81"/>
        <end position="546"/>
    </location>
</feature>
<feature type="domain" description="Cytochrome b5 heme-binding" evidence="4">
    <location>
        <begin position="83"/>
        <end position="162"/>
    </location>
</feature>
<feature type="region of interest" description="Hinge" evidence="1">
    <location>
        <begin position="166"/>
        <end position="175"/>
    </location>
</feature>
<feature type="region of interest" description="Moco domain" evidence="1">
    <location>
        <begin position="176"/>
        <end position="402"/>
    </location>
</feature>
<feature type="region of interest" description="Homodimerization" evidence="1">
    <location>
        <begin position="403"/>
        <end position="539"/>
    </location>
</feature>
<feature type="binding site" description="axial binding residue" evidence="4">
    <location>
        <position position="119"/>
    </location>
    <ligand>
        <name>heme b</name>
        <dbReference type="ChEBI" id="CHEBI:60344"/>
    </ligand>
    <ligandPart>
        <name>Fe</name>
        <dbReference type="ChEBI" id="CHEBI:18248"/>
    </ligandPart>
</feature>
<feature type="binding site" description="axial binding residue" evidence="4">
    <location>
        <position position="144"/>
    </location>
    <ligand>
        <name>heme b</name>
        <dbReference type="ChEBI" id="CHEBI:60344"/>
    </ligand>
    <ligandPart>
        <name>Fe</name>
        <dbReference type="ChEBI" id="CHEBI:18248"/>
    </ligandPart>
</feature>
<feature type="binding site" evidence="2">
    <location>
        <position position="146"/>
    </location>
    <ligand>
        <name>heme b</name>
        <dbReference type="ChEBI" id="CHEBI:60344"/>
    </ligand>
</feature>
<feature type="binding site" evidence="1">
    <location>
        <position position="148"/>
    </location>
    <ligand>
        <name>heme b</name>
        <dbReference type="ChEBI" id="CHEBI:60344"/>
    </ligand>
</feature>
<feature type="binding site" evidence="1">
    <location>
        <begin position="216"/>
        <end position="220"/>
    </location>
    <ligand>
        <name>Mo-molybdopterin</name>
        <dbReference type="ChEBI" id="CHEBI:71302"/>
    </ligand>
</feature>
<feature type="binding site" evidence="1">
    <location>
        <position position="265"/>
    </location>
    <ligand>
        <name>Mo-molybdopterin</name>
        <dbReference type="ChEBI" id="CHEBI:71302"/>
    </ligand>
    <ligandPart>
        <name>Mo</name>
        <dbReference type="ChEBI" id="CHEBI:28685"/>
    </ligandPart>
</feature>
<feature type="binding site" evidence="1">
    <location>
        <position position="323"/>
    </location>
    <ligand>
        <name>Mo-molybdopterin</name>
        <dbReference type="ChEBI" id="CHEBI:71302"/>
    </ligand>
</feature>
<feature type="binding site" evidence="1">
    <location>
        <position position="362"/>
    </location>
    <ligand>
        <name>Mo-molybdopterin</name>
        <dbReference type="ChEBI" id="CHEBI:71302"/>
    </ligand>
</feature>
<feature type="binding site" evidence="1">
    <location>
        <position position="367"/>
    </location>
    <ligand>
        <name>Mo-molybdopterin</name>
        <dbReference type="ChEBI" id="CHEBI:71302"/>
    </ligand>
</feature>
<feature type="binding site" evidence="1">
    <location>
        <begin position="378"/>
        <end position="380"/>
    </location>
    <ligand>
        <name>Mo-molybdopterin</name>
        <dbReference type="ChEBI" id="CHEBI:71302"/>
    </ligand>
</feature>
<feature type="modified residue" description="Phosphoserine" evidence="2">
    <location>
        <position position="124"/>
    </location>
</feature>
<feature type="sequence conflict" description="In Ref. 1; BAE28865." evidence="5" ref="1">
    <original>G</original>
    <variation>S</variation>
    <location>
        <position position="455"/>
    </location>
</feature>
<proteinExistence type="evidence at protein level"/>